<dbReference type="EMBL" id="AE016795">
    <property type="protein sequence ID" value="AAO09408.1"/>
    <property type="molecule type" value="Genomic_DNA"/>
</dbReference>
<dbReference type="RefSeq" id="WP_011078972.1">
    <property type="nucleotide sequence ID" value="NC_004459.3"/>
</dbReference>
<dbReference type="SMR" id="Q8DDQ2"/>
<dbReference type="KEGG" id="vvu:VV1_0906"/>
<dbReference type="HOGENOM" id="CLU_086034_5_1_6"/>
<dbReference type="Proteomes" id="UP000002275">
    <property type="component" value="Chromosome 1"/>
</dbReference>
<dbReference type="GO" id="GO:0033281">
    <property type="term" value="C:TAT protein transport complex"/>
    <property type="evidence" value="ECO:0007669"/>
    <property type="project" value="UniProtKB-UniRule"/>
</dbReference>
<dbReference type="GO" id="GO:0008320">
    <property type="term" value="F:protein transmembrane transporter activity"/>
    <property type="evidence" value="ECO:0007669"/>
    <property type="project" value="UniProtKB-UniRule"/>
</dbReference>
<dbReference type="GO" id="GO:0043953">
    <property type="term" value="P:protein transport by the Tat complex"/>
    <property type="evidence" value="ECO:0007669"/>
    <property type="project" value="UniProtKB-UniRule"/>
</dbReference>
<dbReference type="FunFam" id="1.20.5.3310:FF:000001">
    <property type="entry name" value="Probable Sec-independent protein translocase protein TatE"/>
    <property type="match status" value="1"/>
</dbReference>
<dbReference type="Gene3D" id="1.20.5.3310">
    <property type="match status" value="1"/>
</dbReference>
<dbReference type="HAMAP" id="MF_00236">
    <property type="entry name" value="TatA_E"/>
    <property type="match status" value="1"/>
</dbReference>
<dbReference type="InterPro" id="IPR003369">
    <property type="entry name" value="TatA/B/E"/>
</dbReference>
<dbReference type="InterPro" id="IPR006312">
    <property type="entry name" value="TatA/E"/>
</dbReference>
<dbReference type="NCBIfam" id="NF002500">
    <property type="entry name" value="PRK01833.1"/>
    <property type="match status" value="1"/>
</dbReference>
<dbReference type="NCBIfam" id="NF002813">
    <property type="entry name" value="PRK02958.1"/>
    <property type="match status" value="1"/>
</dbReference>
<dbReference type="NCBIfam" id="NF003396">
    <property type="entry name" value="PRK04598.1"/>
    <property type="match status" value="1"/>
</dbReference>
<dbReference type="NCBIfam" id="TIGR01411">
    <property type="entry name" value="tatAE"/>
    <property type="match status" value="1"/>
</dbReference>
<dbReference type="PANTHER" id="PTHR42982">
    <property type="entry name" value="SEC-INDEPENDENT PROTEIN TRANSLOCASE PROTEIN TATA"/>
    <property type="match status" value="1"/>
</dbReference>
<dbReference type="PANTHER" id="PTHR42982:SF1">
    <property type="entry name" value="SEC-INDEPENDENT PROTEIN TRANSLOCASE PROTEIN TATA"/>
    <property type="match status" value="1"/>
</dbReference>
<dbReference type="Pfam" id="PF02416">
    <property type="entry name" value="TatA_B_E"/>
    <property type="match status" value="1"/>
</dbReference>
<gene>
    <name evidence="1" type="primary">tatA</name>
    <name type="ordered locus">VV1_0906</name>
</gene>
<protein>
    <recommendedName>
        <fullName evidence="1">Sec-independent protein translocase protein TatA</fullName>
    </recommendedName>
</protein>
<name>TATA_VIBVU</name>
<comment type="function">
    <text evidence="1">Part of the twin-arginine translocation (Tat) system that transports large folded proteins containing a characteristic twin-arginine motif in their signal peptide across membranes. TatA could form the protein-conducting channel of the Tat system.</text>
</comment>
<comment type="subunit">
    <text evidence="1">The Tat system comprises two distinct complexes: a TatABC complex, containing multiple copies of TatA, TatB and TatC subunits, and a separate TatA complex, containing only TatA subunits. Substrates initially bind to the TatABC complex, which probably triggers association of the separate TatA complex to form the active translocon.</text>
</comment>
<comment type="subcellular location">
    <subcellularLocation>
        <location evidence="1">Cell inner membrane</location>
        <topology evidence="1">Single-pass membrane protein</topology>
    </subcellularLocation>
</comment>
<comment type="similarity">
    <text evidence="1">Belongs to the TatA/E family.</text>
</comment>
<accession>Q8DDQ2</accession>
<organism>
    <name type="scientific">Vibrio vulnificus (strain CMCP6)</name>
    <dbReference type="NCBI Taxonomy" id="216895"/>
    <lineage>
        <taxon>Bacteria</taxon>
        <taxon>Pseudomonadati</taxon>
        <taxon>Pseudomonadota</taxon>
        <taxon>Gammaproteobacteria</taxon>
        <taxon>Vibrionales</taxon>
        <taxon>Vibrionaceae</taxon>
        <taxon>Vibrio</taxon>
    </lineage>
</organism>
<reference key="1">
    <citation type="submission" date="2002-12" db="EMBL/GenBank/DDBJ databases">
        <title>Complete genome sequence of Vibrio vulnificus CMCP6.</title>
        <authorList>
            <person name="Rhee J.H."/>
            <person name="Kim S.Y."/>
            <person name="Chung S.S."/>
            <person name="Kim J.J."/>
            <person name="Moon Y.H."/>
            <person name="Jeong H."/>
            <person name="Choy H.E."/>
        </authorList>
    </citation>
    <scope>NUCLEOTIDE SEQUENCE [LARGE SCALE GENOMIC DNA]</scope>
    <source>
        <strain>CMCP6</strain>
    </source>
</reference>
<evidence type="ECO:0000255" key="1">
    <source>
        <dbReference type="HAMAP-Rule" id="MF_00236"/>
    </source>
</evidence>
<evidence type="ECO:0000256" key="2">
    <source>
        <dbReference type="SAM" id="MobiDB-lite"/>
    </source>
</evidence>
<feature type="chain" id="PRO_0000097964" description="Sec-independent protein translocase protein TatA">
    <location>
        <begin position="1"/>
        <end position="78"/>
    </location>
</feature>
<feature type="transmembrane region" description="Helical" evidence="1">
    <location>
        <begin position="1"/>
        <end position="21"/>
    </location>
</feature>
<feature type="region of interest" description="Disordered" evidence="2">
    <location>
        <begin position="47"/>
        <end position="78"/>
    </location>
</feature>
<feature type="compositionally biased region" description="Basic and acidic residues" evidence="2">
    <location>
        <begin position="47"/>
        <end position="59"/>
    </location>
</feature>
<feature type="compositionally biased region" description="Polar residues" evidence="2">
    <location>
        <begin position="60"/>
        <end position="69"/>
    </location>
</feature>
<sequence length="78" mass="8508">MGGISIWQLLIIAVIVVLLFGTKKLRGIGSDLGGAIKGFKKAMNEEESEKKDADFEPKSLEQQSKQAATESKKDKEQA</sequence>
<proteinExistence type="inferred from homology"/>
<keyword id="KW-0997">Cell inner membrane</keyword>
<keyword id="KW-1003">Cell membrane</keyword>
<keyword id="KW-0472">Membrane</keyword>
<keyword id="KW-0653">Protein transport</keyword>
<keyword id="KW-0811">Translocation</keyword>
<keyword id="KW-0812">Transmembrane</keyword>
<keyword id="KW-1133">Transmembrane helix</keyword>
<keyword id="KW-0813">Transport</keyword>